<feature type="signal peptide" evidence="1">
    <location>
        <begin position="1"/>
        <end position="19"/>
    </location>
</feature>
<feature type="chain" id="PRO_0000015227" description="Ig heavy chain V region M167">
    <location>
        <begin position="20"/>
        <end position="144"/>
    </location>
</feature>
<feature type="domain" description="Ig-like">
    <location>
        <begin position="20"/>
        <end position="133"/>
    </location>
</feature>
<feature type="sequence conflict" description="In Ref. 2; AA sequence." evidence="2" ref="2">
    <original>N</original>
    <variation>D</variation>
    <location>
        <position position="125"/>
    </location>
</feature>
<feature type="non-terminal residue">
    <location>
        <position position="144"/>
    </location>
</feature>
<name>HVM26_MOUSE</name>
<evidence type="ECO:0000269" key="1">
    <source>
    </source>
</evidence>
<evidence type="ECO:0000305" key="2"/>
<reference key="1">
    <citation type="journal article" date="1981" name="Cell">
        <title>Antibody diversity: somatic hypermutation of rearranged VH genes.</title>
        <authorList>
            <person name="Kim S."/>
            <person name="Davis M."/>
            <person name="Sinn E."/>
            <person name="Patten P."/>
            <person name="Hood L."/>
        </authorList>
    </citation>
    <scope>NUCLEOTIDE SEQUENCE [GENOMIC DNA]</scope>
</reference>
<reference key="2">
    <citation type="journal article" date="1976" name="Proc. Natl. Acad. Sci. U.S.A.">
        <title>Size differences among immunoglobulin heavy chains from phosphorylcholine-binding proteins.</title>
        <authorList>
            <person name="Rudikoff S."/>
            <person name="Potter M."/>
        </authorList>
    </citation>
    <scope>PROTEIN SEQUENCE OF 20-142</scope>
</reference>
<protein>
    <recommendedName>
        <fullName>Ig heavy chain V region M167</fullName>
    </recommendedName>
</protein>
<sequence length="144" mass="16219">MKMWLNWVFLLTLLHGIQCEVKVVESGGGLVQPGGSLRLSCATSGFTFSDFYMEWVRQTPGKRLEWIAASRSKAHDYRTEYSASVKGRFIVSRDTSQSVLYLQMNALRAEDTATYYCTRDADYGNSYFGYFDVWGAGTTVTVSS</sequence>
<proteinExistence type="evidence at protein level"/>
<keyword id="KW-1064">Adaptive immunity</keyword>
<keyword id="KW-0903">Direct protein sequencing</keyword>
<keyword id="KW-0391">Immunity</keyword>
<keyword id="KW-1280">Immunoglobulin</keyword>
<keyword id="KW-1185">Reference proteome</keyword>
<keyword id="KW-0732">Signal</keyword>
<organism>
    <name type="scientific">Mus musculus</name>
    <name type="common">Mouse</name>
    <dbReference type="NCBI Taxonomy" id="10090"/>
    <lineage>
        <taxon>Eukaryota</taxon>
        <taxon>Metazoa</taxon>
        <taxon>Chordata</taxon>
        <taxon>Craniata</taxon>
        <taxon>Vertebrata</taxon>
        <taxon>Euteleostomi</taxon>
        <taxon>Mammalia</taxon>
        <taxon>Eutheria</taxon>
        <taxon>Euarchontoglires</taxon>
        <taxon>Glires</taxon>
        <taxon>Rodentia</taxon>
        <taxon>Myomorpha</taxon>
        <taxon>Muroidea</taxon>
        <taxon>Muridae</taxon>
        <taxon>Murinae</taxon>
        <taxon>Mus</taxon>
        <taxon>Mus</taxon>
    </lineage>
</organism>
<accession>P01795</accession>
<dbReference type="EMBL" id="J00516">
    <property type="protein sequence ID" value="AAC18867.2"/>
    <property type="status" value="ALT_TERM"/>
    <property type="molecule type" value="Genomic_DNA"/>
</dbReference>
<dbReference type="PIR" id="A90818">
    <property type="entry name" value="AVMS67"/>
</dbReference>
<dbReference type="SMR" id="P01795"/>
<dbReference type="FunCoup" id="P01795">
    <property type="interactions" value="576"/>
</dbReference>
<dbReference type="InParanoid" id="P01795"/>
<dbReference type="Proteomes" id="UP000000589">
    <property type="component" value="Unplaced"/>
</dbReference>
<dbReference type="RNAct" id="P01795">
    <property type="molecule type" value="protein"/>
</dbReference>
<dbReference type="GO" id="GO:0005576">
    <property type="term" value="C:extracellular region"/>
    <property type="evidence" value="ECO:0007669"/>
    <property type="project" value="UniProtKB-ARBA"/>
</dbReference>
<dbReference type="GO" id="GO:0019814">
    <property type="term" value="C:immunoglobulin complex"/>
    <property type="evidence" value="ECO:0007669"/>
    <property type="project" value="UniProtKB-KW"/>
</dbReference>
<dbReference type="GO" id="GO:0003823">
    <property type="term" value="F:antigen binding"/>
    <property type="evidence" value="ECO:0000318"/>
    <property type="project" value="GO_Central"/>
</dbReference>
<dbReference type="GO" id="GO:0016064">
    <property type="term" value="P:immunoglobulin mediated immune response"/>
    <property type="evidence" value="ECO:0000318"/>
    <property type="project" value="GO_Central"/>
</dbReference>
<dbReference type="FunFam" id="2.60.40.10:FF:001372">
    <property type="entry name" value="Ig heavy chain V region M603"/>
    <property type="match status" value="1"/>
</dbReference>
<dbReference type="Gene3D" id="2.60.40.10">
    <property type="entry name" value="Immunoglobulins"/>
    <property type="match status" value="1"/>
</dbReference>
<dbReference type="InterPro" id="IPR007110">
    <property type="entry name" value="Ig-like_dom"/>
</dbReference>
<dbReference type="InterPro" id="IPR036179">
    <property type="entry name" value="Ig-like_dom_sf"/>
</dbReference>
<dbReference type="InterPro" id="IPR013783">
    <property type="entry name" value="Ig-like_fold"/>
</dbReference>
<dbReference type="InterPro" id="IPR003599">
    <property type="entry name" value="Ig_sub"/>
</dbReference>
<dbReference type="InterPro" id="IPR013106">
    <property type="entry name" value="Ig_V-set"/>
</dbReference>
<dbReference type="InterPro" id="IPR050199">
    <property type="entry name" value="IgHV"/>
</dbReference>
<dbReference type="PANTHER" id="PTHR23266">
    <property type="entry name" value="IMMUNOGLOBULIN HEAVY CHAIN"/>
    <property type="match status" value="1"/>
</dbReference>
<dbReference type="Pfam" id="PF07686">
    <property type="entry name" value="V-set"/>
    <property type="match status" value="1"/>
</dbReference>
<dbReference type="SMART" id="SM00409">
    <property type="entry name" value="IG"/>
    <property type="match status" value="1"/>
</dbReference>
<dbReference type="SMART" id="SM00406">
    <property type="entry name" value="IGv"/>
    <property type="match status" value="1"/>
</dbReference>
<dbReference type="SUPFAM" id="SSF48726">
    <property type="entry name" value="Immunoglobulin"/>
    <property type="match status" value="1"/>
</dbReference>
<dbReference type="PROSITE" id="PS50835">
    <property type="entry name" value="IG_LIKE"/>
    <property type="match status" value="1"/>
</dbReference>
<comment type="miscellaneous">
    <text>This chain was isolated from an IgA myeloma protein that binds phosphorylcholine.</text>
</comment>